<comment type="function">
    <text evidence="1">Bidirectionally degrades single-stranded DNA into large acid-insoluble oligonucleotides, which are then degraded further into small acid-soluble oligonucleotides.</text>
</comment>
<comment type="catalytic activity">
    <reaction evidence="1">
        <text>Exonucleolytic cleavage in either 5'- to 3'- or 3'- to 5'-direction to yield nucleoside 5'-phosphates.</text>
        <dbReference type="EC" id="3.1.11.6"/>
    </reaction>
</comment>
<comment type="subunit">
    <text evidence="1">Heterooligomer composed of large and small subunits.</text>
</comment>
<comment type="subcellular location">
    <subcellularLocation>
        <location evidence="1">Cytoplasm</location>
    </subcellularLocation>
</comment>
<comment type="similarity">
    <text evidence="1">Belongs to the XseB family.</text>
</comment>
<reference key="1">
    <citation type="journal article" date="2006" name="J. Bacteriol.">
        <title>Pathogenomic sequence analysis of Bacillus cereus and Bacillus thuringiensis isolates closely related to Bacillus anthracis.</title>
        <authorList>
            <person name="Han C.S."/>
            <person name="Xie G."/>
            <person name="Challacombe J.F."/>
            <person name="Altherr M.R."/>
            <person name="Bhotika S.S."/>
            <person name="Bruce D."/>
            <person name="Campbell C.S."/>
            <person name="Campbell M.L."/>
            <person name="Chen J."/>
            <person name="Chertkov O."/>
            <person name="Cleland C."/>
            <person name="Dimitrijevic M."/>
            <person name="Doggett N.A."/>
            <person name="Fawcett J.J."/>
            <person name="Glavina T."/>
            <person name="Goodwin L.A."/>
            <person name="Hill K.K."/>
            <person name="Hitchcock P."/>
            <person name="Jackson P.J."/>
            <person name="Keim P."/>
            <person name="Kewalramani A.R."/>
            <person name="Longmire J."/>
            <person name="Lucas S."/>
            <person name="Malfatti S."/>
            <person name="McMurry K."/>
            <person name="Meincke L.J."/>
            <person name="Misra M."/>
            <person name="Moseman B.L."/>
            <person name="Mundt M."/>
            <person name="Munk A.C."/>
            <person name="Okinaka R.T."/>
            <person name="Parson-Quintana B."/>
            <person name="Reilly L.P."/>
            <person name="Richardson P."/>
            <person name="Robinson D.L."/>
            <person name="Rubin E."/>
            <person name="Saunders E."/>
            <person name="Tapia R."/>
            <person name="Tesmer J.G."/>
            <person name="Thayer N."/>
            <person name="Thompson L.S."/>
            <person name="Tice H."/>
            <person name="Ticknor L.O."/>
            <person name="Wills P.L."/>
            <person name="Brettin T.S."/>
            <person name="Gilna P."/>
        </authorList>
    </citation>
    <scope>NUCLEOTIDE SEQUENCE [LARGE SCALE GENOMIC DNA]</scope>
    <source>
        <strain>97-27</strain>
    </source>
</reference>
<gene>
    <name evidence="1" type="primary">xseB</name>
    <name type="ordered locus">BT9727_3921</name>
</gene>
<accession>Q6HDY6</accession>
<name>EX7S_BACHK</name>
<protein>
    <recommendedName>
        <fullName evidence="1">Exodeoxyribonuclease 7 small subunit</fullName>
        <ecNumber evidence="1">3.1.11.6</ecNumber>
    </recommendedName>
    <alternativeName>
        <fullName evidence="1">Exodeoxyribonuclease VII small subunit</fullName>
        <shortName evidence="1">Exonuclease VII small subunit</shortName>
    </alternativeName>
</protein>
<proteinExistence type="inferred from homology"/>
<sequence>MENKLSFEEAISQLEHLVSKLEQGDVPLEEAISYFKEGMELSKLCDEKLKNVQEQMAVILGEDGELEPFTALGDEA</sequence>
<evidence type="ECO:0000255" key="1">
    <source>
        <dbReference type="HAMAP-Rule" id="MF_00337"/>
    </source>
</evidence>
<organism>
    <name type="scientific">Bacillus thuringiensis subsp. konkukian (strain 97-27)</name>
    <dbReference type="NCBI Taxonomy" id="281309"/>
    <lineage>
        <taxon>Bacteria</taxon>
        <taxon>Bacillati</taxon>
        <taxon>Bacillota</taxon>
        <taxon>Bacilli</taxon>
        <taxon>Bacillales</taxon>
        <taxon>Bacillaceae</taxon>
        <taxon>Bacillus</taxon>
        <taxon>Bacillus cereus group</taxon>
    </lineage>
</organism>
<keyword id="KW-0963">Cytoplasm</keyword>
<keyword id="KW-0269">Exonuclease</keyword>
<keyword id="KW-0378">Hydrolase</keyword>
<keyword id="KW-0540">Nuclease</keyword>
<feature type="chain" id="PRO_0000206918" description="Exodeoxyribonuclease 7 small subunit">
    <location>
        <begin position="1"/>
        <end position="76"/>
    </location>
</feature>
<dbReference type="EC" id="3.1.11.6" evidence="1"/>
<dbReference type="EMBL" id="AE017355">
    <property type="protein sequence ID" value="AAT63126.1"/>
    <property type="molecule type" value="Genomic_DNA"/>
</dbReference>
<dbReference type="RefSeq" id="WP_000428423.1">
    <property type="nucleotide sequence ID" value="NC_005957.1"/>
</dbReference>
<dbReference type="RefSeq" id="YP_038240.1">
    <property type="nucleotide sequence ID" value="NC_005957.1"/>
</dbReference>
<dbReference type="SMR" id="Q6HDY6"/>
<dbReference type="GeneID" id="93006923"/>
<dbReference type="KEGG" id="btk:BT9727_3921"/>
<dbReference type="PATRIC" id="fig|281309.8.peg.4184"/>
<dbReference type="HOGENOM" id="CLU_145918_3_1_9"/>
<dbReference type="Proteomes" id="UP000001301">
    <property type="component" value="Chromosome"/>
</dbReference>
<dbReference type="GO" id="GO:0005829">
    <property type="term" value="C:cytosol"/>
    <property type="evidence" value="ECO:0007669"/>
    <property type="project" value="TreeGrafter"/>
</dbReference>
<dbReference type="GO" id="GO:0009318">
    <property type="term" value="C:exodeoxyribonuclease VII complex"/>
    <property type="evidence" value="ECO:0007669"/>
    <property type="project" value="InterPro"/>
</dbReference>
<dbReference type="GO" id="GO:0008855">
    <property type="term" value="F:exodeoxyribonuclease VII activity"/>
    <property type="evidence" value="ECO:0007669"/>
    <property type="project" value="UniProtKB-UniRule"/>
</dbReference>
<dbReference type="GO" id="GO:0006308">
    <property type="term" value="P:DNA catabolic process"/>
    <property type="evidence" value="ECO:0007669"/>
    <property type="project" value="UniProtKB-UniRule"/>
</dbReference>
<dbReference type="FunFam" id="1.10.287.1040:FF:000002">
    <property type="entry name" value="Exodeoxyribonuclease 7 small subunit"/>
    <property type="match status" value="1"/>
</dbReference>
<dbReference type="Gene3D" id="1.10.287.1040">
    <property type="entry name" value="Exonuclease VII, small subunit"/>
    <property type="match status" value="1"/>
</dbReference>
<dbReference type="HAMAP" id="MF_00337">
    <property type="entry name" value="Exonuc_7_S"/>
    <property type="match status" value="1"/>
</dbReference>
<dbReference type="InterPro" id="IPR003761">
    <property type="entry name" value="Exonuc_VII_S"/>
</dbReference>
<dbReference type="InterPro" id="IPR037004">
    <property type="entry name" value="Exonuc_VII_ssu_sf"/>
</dbReference>
<dbReference type="NCBIfam" id="NF010666">
    <property type="entry name" value="PRK14063.1"/>
    <property type="match status" value="1"/>
</dbReference>
<dbReference type="NCBIfam" id="TIGR01280">
    <property type="entry name" value="xseB"/>
    <property type="match status" value="1"/>
</dbReference>
<dbReference type="PANTHER" id="PTHR34137">
    <property type="entry name" value="EXODEOXYRIBONUCLEASE 7 SMALL SUBUNIT"/>
    <property type="match status" value="1"/>
</dbReference>
<dbReference type="PANTHER" id="PTHR34137:SF1">
    <property type="entry name" value="EXODEOXYRIBONUCLEASE 7 SMALL SUBUNIT"/>
    <property type="match status" value="1"/>
</dbReference>
<dbReference type="Pfam" id="PF02609">
    <property type="entry name" value="Exonuc_VII_S"/>
    <property type="match status" value="1"/>
</dbReference>
<dbReference type="PIRSF" id="PIRSF006488">
    <property type="entry name" value="Exonuc_VII_S"/>
    <property type="match status" value="1"/>
</dbReference>
<dbReference type="SUPFAM" id="SSF116842">
    <property type="entry name" value="XseB-like"/>
    <property type="match status" value="1"/>
</dbReference>